<name>RSXE_SALG2</name>
<sequence length="230" mass="24318">MSEIKDIVVQGLWKNNSALVQLLGLCPLLAVTSTATNALGLGLATTLVLTLTNLTVSALRRWTPAEIRIPIYVMIIASVVSAVQMLINAYAFGLYQSLGIFIPLIVTNCIVVGRAEAFAAKKGPWLSALDGFSIGMGATGAMFVLGSLREILGNGTLFDGADSLLGGWAKVLRVEIFHTDSPFLLAMLPPGAFIGLGLMLAVKYLIDEKMKKRRAETAPSAVPAGETGKV</sequence>
<dbReference type="EC" id="7.-.-.-" evidence="1"/>
<dbReference type="EMBL" id="AM933173">
    <property type="protein sequence ID" value="CAR37523.1"/>
    <property type="molecule type" value="Genomic_DNA"/>
</dbReference>
<dbReference type="RefSeq" id="WP_001289628.1">
    <property type="nucleotide sequence ID" value="NC_011274.1"/>
</dbReference>
<dbReference type="SMR" id="B5RAK5"/>
<dbReference type="KEGG" id="seg:SG1664"/>
<dbReference type="HOGENOM" id="CLU_046659_1_0_6"/>
<dbReference type="Proteomes" id="UP000008321">
    <property type="component" value="Chromosome"/>
</dbReference>
<dbReference type="GO" id="GO:0005886">
    <property type="term" value="C:plasma membrane"/>
    <property type="evidence" value="ECO:0007669"/>
    <property type="project" value="UniProtKB-SubCell"/>
</dbReference>
<dbReference type="GO" id="GO:0022900">
    <property type="term" value="P:electron transport chain"/>
    <property type="evidence" value="ECO:0007669"/>
    <property type="project" value="UniProtKB-UniRule"/>
</dbReference>
<dbReference type="HAMAP" id="MF_00478">
    <property type="entry name" value="RsxE_RnfE"/>
    <property type="match status" value="1"/>
</dbReference>
<dbReference type="InterPro" id="IPR003667">
    <property type="entry name" value="NqrDE/RnfAE"/>
</dbReference>
<dbReference type="InterPro" id="IPR010968">
    <property type="entry name" value="RnfE"/>
</dbReference>
<dbReference type="NCBIfam" id="NF009070">
    <property type="entry name" value="PRK12405.1"/>
    <property type="match status" value="1"/>
</dbReference>
<dbReference type="NCBIfam" id="TIGR01948">
    <property type="entry name" value="rnfE"/>
    <property type="match status" value="1"/>
</dbReference>
<dbReference type="PANTHER" id="PTHR30586">
    <property type="entry name" value="ELECTRON TRANSPORT COMPLEX PROTEIN RNFE"/>
    <property type="match status" value="1"/>
</dbReference>
<dbReference type="PANTHER" id="PTHR30586:SF0">
    <property type="entry name" value="ION-TRANSLOCATING OXIDOREDUCTASE COMPLEX SUBUNIT E"/>
    <property type="match status" value="1"/>
</dbReference>
<dbReference type="Pfam" id="PF02508">
    <property type="entry name" value="Rnf-Nqr"/>
    <property type="match status" value="1"/>
</dbReference>
<dbReference type="PIRSF" id="PIRSF006102">
    <property type="entry name" value="NQR_DE"/>
    <property type="match status" value="1"/>
</dbReference>
<gene>
    <name evidence="1" type="primary">rsxE</name>
    <name type="synonym">rnfE</name>
    <name type="ordered locus">SG1664</name>
</gene>
<protein>
    <recommendedName>
        <fullName evidence="1">Ion-translocating oxidoreductase complex subunit E</fullName>
        <ecNumber evidence="1">7.-.-.-</ecNumber>
    </recommendedName>
    <alternativeName>
        <fullName evidence="1">Rsx electron transport complex subunit E</fullName>
    </alternativeName>
</protein>
<reference key="1">
    <citation type="journal article" date="2008" name="Genome Res.">
        <title>Comparative genome analysis of Salmonella enteritidis PT4 and Salmonella gallinarum 287/91 provides insights into evolutionary and host adaptation pathways.</title>
        <authorList>
            <person name="Thomson N.R."/>
            <person name="Clayton D.J."/>
            <person name="Windhorst D."/>
            <person name="Vernikos G."/>
            <person name="Davidson S."/>
            <person name="Churcher C."/>
            <person name="Quail M.A."/>
            <person name="Stevens M."/>
            <person name="Jones M.A."/>
            <person name="Watson M."/>
            <person name="Barron A."/>
            <person name="Layton A."/>
            <person name="Pickard D."/>
            <person name="Kingsley R.A."/>
            <person name="Bignell A."/>
            <person name="Clark L."/>
            <person name="Harris B."/>
            <person name="Ormond D."/>
            <person name="Abdellah Z."/>
            <person name="Brooks K."/>
            <person name="Cherevach I."/>
            <person name="Chillingworth T."/>
            <person name="Woodward J."/>
            <person name="Norberczak H."/>
            <person name="Lord A."/>
            <person name="Arrowsmith C."/>
            <person name="Jagels K."/>
            <person name="Moule S."/>
            <person name="Mungall K."/>
            <person name="Saunders M."/>
            <person name="Whitehead S."/>
            <person name="Chabalgoity J.A."/>
            <person name="Maskell D."/>
            <person name="Humphreys T."/>
            <person name="Roberts M."/>
            <person name="Barrow P.A."/>
            <person name="Dougan G."/>
            <person name="Parkhill J."/>
        </authorList>
    </citation>
    <scope>NUCLEOTIDE SEQUENCE [LARGE SCALE GENOMIC DNA]</scope>
    <source>
        <strain>287/91 / NCTC 13346</strain>
    </source>
</reference>
<organism>
    <name type="scientific">Salmonella gallinarum (strain 287/91 / NCTC 13346)</name>
    <dbReference type="NCBI Taxonomy" id="550538"/>
    <lineage>
        <taxon>Bacteria</taxon>
        <taxon>Pseudomonadati</taxon>
        <taxon>Pseudomonadota</taxon>
        <taxon>Gammaproteobacteria</taxon>
        <taxon>Enterobacterales</taxon>
        <taxon>Enterobacteriaceae</taxon>
        <taxon>Salmonella</taxon>
    </lineage>
</organism>
<accession>B5RAK5</accession>
<evidence type="ECO:0000255" key="1">
    <source>
        <dbReference type="HAMAP-Rule" id="MF_00478"/>
    </source>
</evidence>
<keyword id="KW-0997">Cell inner membrane</keyword>
<keyword id="KW-1003">Cell membrane</keyword>
<keyword id="KW-0249">Electron transport</keyword>
<keyword id="KW-0472">Membrane</keyword>
<keyword id="KW-1278">Translocase</keyword>
<keyword id="KW-0812">Transmembrane</keyword>
<keyword id="KW-1133">Transmembrane helix</keyword>
<keyword id="KW-0813">Transport</keyword>
<comment type="function">
    <text evidence="1">Part of a membrane-bound complex that couples electron transfer with translocation of ions across the membrane. Required to maintain the reduced state of SoxR.</text>
</comment>
<comment type="subunit">
    <text evidence="1">The complex is composed of six subunits: RsxA, RsxB, RsxC, RsxD, RsxE and RsxG.</text>
</comment>
<comment type="subcellular location">
    <subcellularLocation>
        <location evidence="1">Cell inner membrane</location>
        <topology evidence="1">Multi-pass membrane protein</topology>
    </subcellularLocation>
</comment>
<comment type="similarity">
    <text evidence="1">Belongs to the NqrDE/RnfAE family.</text>
</comment>
<proteinExistence type="inferred from homology"/>
<feature type="chain" id="PRO_1000125861" description="Ion-translocating oxidoreductase complex subunit E">
    <location>
        <begin position="1"/>
        <end position="230"/>
    </location>
</feature>
<feature type="transmembrane region" description="Helical" evidence="1">
    <location>
        <begin position="18"/>
        <end position="38"/>
    </location>
</feature>
<feature type="transmembrane region" description="Helical" evidence="1">
    <location>
        <begin position="39"/>
        <end position="59"/>
    </location>
</feature>
<feature type="transmembrane region" description="Helical" evidence="1">
    <location>
        <begin position="63"/>
        <end position="83"/>
    </location>
</feature>
<feature type="transmembrane region" description="Helical" evidence="1">
    <location>
        <begin position="86"/>
        <end position="106"/>
    </location>
</feature>
<feature type="transmembrane region" description="Helical" evidence="1">
    <location>
        <begin position="125"/>
        <end position="145"/>
    </location>
</feature>
<feature type="transmembrane region" description="Helical" evidence="1">
    <location>
        <begin position="182"/>
        <end position="202"/>
    </location>
</feature>